<evidence type="ECO:0000250" key="1"/>
<evidence type="ECO:0000255" key="2">
    <source>
        <dbReference type="PROSITE-ProRule" id="PRU00269"/>
    </source>
</evidence>
<evidence type="ECO:0000255" key="3">
    <source>
        <dbReference type="PROSITE-ProRule" id="PRU00534"/>
    </source>
</evidence>
<evidence type="ECO:0000255" key="4">
    <source>
        <dbReference type="PROSITE-ProRule" id="PRU00535"/>
    </source>
</evidence>
<evidence type="ECO:0000269" key="5">
    <source>
    </source>
</evidence>
<evidence type="ECO:0000269" key="6">
    <source>
    </source>
</evidence>
<evidence type="ECO:0000269" key="7">
    <source>
    </source>
</evidence>
<evidence type="ECO:0000269" key="8">
    <source>
    </source>
</evidence>
<evidence type="ECO:0000269" key="9">
    <source>
    </source>
</evidence>
<evidence type="ECO:0000269" key="10">
    <source>
    </source>
</evidence>
<evidence type="ECO:0000269" key="11">
    <source>
    </source>
</evidence>
<evidence type="ECO:0000269" key="12">
    <source>
    </source>
</evidence>
<evidence type="ECO:0000269" key="13">
    <source>
    </source>
</evidence>
<evidence type="ECO:0000269" key="14">
    <source>
    </source>
</evidence>
<evidence type="ECO:0000269" key="15">
    <source>
    </source>
</evidence>
<evidence type="ECO:0000305" key="16"/>
<reference key="1">
    <citation type="journal article" date="1995" name="Cell">
        <title>The mei-41 gene of D. melanogaster is a structural and functional homolog of the human ataxia telangiectasia gene.</title>
        <authorList>
            <person name="Hari K.L."/>
            <person name="Santerre A."/>
            <person name="Sekelsky J.J."/>
            <person name="McKim K.S."/>
            <person name="Boyd J.B."/>
            <person name="Hawley R.S."/>
        </authorList>
    </citation>
    <scope>NUCLEOTIDE SEQUENCE [GENOMIC DNA]</scope>
    <scope>FUNCTION</scope>
</reference>
<reference key="2">
    <citation type="journal article" date="2004" name="Mol. Cell. Biol.">
        <title>Drosophila melanogaster MNK/Chk2 and p53 regulate multiple DNA repair and apoptotic pathways following DNA damage.</title>
        <authorList>
            <person name="Brodsky M.H."/>
            <person name="Weinert B.T."/>
            <person name="Tsang G."/>
            <person name="Rong Y.S."/>
            <person name="McGinnis N.M."/>
            <person name="Golic K.G."/>
            <person name="Rio D.C."/>
            <person name="Rubin G.M."/>
        </authorList>
    </citation>
    <scope>NUCLEOTIDE SEQUENCE [MRNA]</scope>
    <scope>INTERACTION WITH MUS304</scope>
</reference>
<reference key="3">
    <citation type="journal article" date="2000" name="Science">
        <title>The genome sequence of Drosophila melanogaster.</title>
        <authorList>
            <person name="Adams M.D."/>
            <person name="Celniker S.E."/>
            <person name="Holt R.A."/>
            <person name="Evans C.A."/>
            <person name="Gocayne J.D."/>
            <person name="Amanatides P.G."/>
            <person name="Scherer S.E."/>
            <person name="Li P.W."/>
            <person name="Hoskins R.A."/>
            <person name="Galle R.F."/>
            <person name="George R.A."/>
            <person name="Lewis S.E."/>
            <person name="Richards S."/>
            <person name="Ashburner M."/>
            <person name="Henderson S.N."/>
            <person name="Sutton G.G."/>
            <person name="Wortman J.R."/>
            <person name="Yandell M.D."/>
            <person name="Zhang Q."/>
            <person name="Chen L.X."/>
            <person name="Brandon R.C."/>
            <person name="Rogers Y.-H.C."/>
            <person name="Blazej R.G."/>
            <person name="Champe M."/>
            <person name="Pfeiffer B.D."/>
            <person name="Wan K.H."/>
            <person name="Doyle C."/>
            <person name="Baxter E.G."/>
            <person name="Helt G."/>
            <person name="Nelson C.R."/>
            <person name="Miklos G.L.G."/>
            <person name="Abril J.F."/>
            <person name="Agbayani A."/>
            <person name="An H.-J."/>
            <person name="Andrews-Pfannkoch C."/>
            <person name="Baldwin D."/>
            <person name="Ballew R.M."/>
            <person name="Basu A."/>
            <person name="Baxendale J."/>
            <person name="Bayraktaroglu L."/>
            <person name="Beasley E.M."/>
            <person name="Beeson K.Y."/>
            <person name="Benos P.V."/>
            <person name="Berman B.P."/>
            <person name="Bhandari D."/>
            <person name="Bolshakov S."/>
            <person name="Borkova D."/>
            <person name="Botchan M.R."/>
            <person name="Bouck J."/>
            <person name="Brokstein P."/>
            <person name="Brottier P."/>
            <person name="Burtis K.C."/>
            <person name="Busam D.A."/>
            <person name="Butler H."/>
            <person name="Cadieu E."/>
            <person name="Center A."/>
            <person name="Chandra I."/>
            <person name="Cherry J.M."/>
            <person name="Cawley S."/>
            <person name="Dahlke C."/>
            <person name="Davenport L.B."/>
            <person name="Davies P."/>
            <person name="de Pablos B."/>
            <person name="Delcher A."/>
            <person name="Deng Z."/>
            <person name="Mays A.D."/>
            <person name="Dew I."/>
            <person name="Dietz S.M."/>
            <person name="Dodson K."/>
            <person name="Doup L.E."/>
            <person name="Downes M."/>
            <person name="Dugan-Rocha S."/>
            <person name="Dunkov B.C."/>
            <person name="Dunn P."/>
            <person name="Durbin K.J."/>
            <person name="Evangelista C.C."/>
            <person name="Ferraz C."/>
            <person name="Ferriera S."/>
            <person name="Fleischmann W."/>
            <person name="Fosler C."/>
            <person name="Gabrielian A.E."/>
            <person name="Garg N.S."/>
            <person name="Gelbart W.M."/>
            <person name="Glasser K."/>
            <person name="Glodek A."/>
            <person name="Gong F."/>
            <person name="Gorrell J.H."/>
            <person name="Gu Z."/>
            <person name="Guan P."/>
            <person name="Harris M."/>
            <person name="Harris N.L."/>
            <person name="Harvey D.A."/>
            <person name="Heiman T.J."/>
            <person name="Hernandez J.R."/>
            <person name="Houck J."/>
            <person name="Hostin D."/>
            <person name="Houston K.A."/>
            <person name="Howland T.J."/>
            <person name="Wei M.-H."/>
            <person name="Ibegwam C."/>
            <person name="Jalali M."/>
            <person name="Kalush F."/>
            <person name="Karpen G.H."/>
            <person name="Ke Z."/>
            <person name="Kennison J.A."/>
            <person name="Ketchum K.A."/>
            <person name="Kimmel B.E."/>
            <person name="Kodira C.D."/>
            <person name="Kraft C.L."/>
            <person name="Kravitz S."/>
            <person name="Kulp D."/>
            <person name="Lai Z."/>
            <person name="Lasko P."/>
            <person name="Lei Y."/>
            <person name="Levitsky A.A."/>
            <person name="Li J.H."/>
            <person name="Li Z."/>
            <person name="Liang Y."/>
            <person name="Lin X."/>
            <person name="Liu X."/>
            <person name="Mattei B."/>
            <person name="McIntosh T.C."/>
            <person name="McLeod M.P."/>
            <person name="McPherson D."/>
            <person name="Merkulov G."/>
            <person name="Milshina N.V."/>
            <person name="Mobarry C."/>
            <person name="Morris J."/>
            <person name="Moshrefi A."/>
            <person name="Mount S.M."/>
            <person name="Moy M."/>
            <person name="Murphy B."/>
            <person name="Murphy L."/>
            <person name="Muzny D.M."/>
            <person name="Nelson D.L."/>
            <person name="Nelson D.R."/>
            <person name="Nelson K.A."/>
            <person name="Nixon K."/>
            <person name="Nusskern D.R."/>
            <person name="Pacleb J.M."/>
            <person name="Palazzolo M."/>
            <person name="Pittman G.S."/>
            <person name="Pan S."/>
            <person name="Pollard J."/>
            <person name="Puri V."/>
            <person name="Reese M.G."/>
            <person name="Reinert K."/>
            <person name="Remington K."/>
            <person name="Saunders R.D.C."/>
            <person name="Scheeler F."/>
            <person name="Shen H."/>
            <person name="Shue B.C."/>
            <person name="Siden-Kiamos I."/>
            <person name="Simpson M."/>
            <person name="Skupski M.P."/>
            <person name="Smith T.J."/>
            <person name="Spier E."/>
            <person name="Spradling A.C."/>
            <person name="Stapleton M."/>
            <person name="Strong R."/>
            <person name="Sun E."/>
            <person name="Svirskas R."/>
            <person name="Tector C."/>
            <person name="Turner R."/>
            <person name="Venter E."/>
            <person name="Wang A.H."/>
            <person name="Wang X."/>
            <person name="Wang Z.-Y."/>
            <person name="Wassarman D.A."/>
            <person name="Weinstock G.M."/>
            <person name="Weissenbach J."/>
            <person name="Williams S.M."/>
            <person name="Woodage T."/>
            <person name="Worley K.C."/>
            <person name="Wu D."/>
            <person name="Yang S."/>
            <person name="Yao Q.A."/>
            <person name="Ye J."/>
            <person name="Yeh R.-F."/>
            <person name="Zaveri J.S."/>
            <person name="Zhan M."/>
            <person name="Zhang G."/>
            <person name="Zhao Q."/>
            <person name="Zheng L."/>
            <person name="Zheng X.H."/>
            <person name="Zhong F.N."/>
            <person name="Zhong W."/>
            <person name="Zhou X."/>
            <person name="Zhu S.C."/>
            <person name="Zhu X."/>
            <person name="Smith H.O."/>
            <person name="Gibbs R.A."/>
            <person name="Myers E.W."/>
            <person name="Rubin G.M."/>
            <person name="Venter J.C."/>
        </authorList>
    </citation>
    <scope>NUCLEOTIDE SEQUENCE [LARGE SCALE GENOMIC DNA]</scope>
    <source>
        <strain>Berkeley</strain>
    </source>
</reference>
<reference key="4">
    <citation type="journal article" date="2002" name="Genome Biol.">
        <title>Annotation of the Drosophila melanogaster euchromatic genome: a systematic review.</title>
        <authorList>
            <person name="Misra S."/>
            <person name="Crosby M.A."/>
            <person name="Mungall C.J."/>
            <person name="Matthews B.B."/>
            <person name="Campbell K.S."/>
            <person name="Hradecky P."/>
            <person name="Huang Y."/>
            <person name="Kaminker J.S."/>
            <person name="Millburn G.H."/>
            <person name="Prochnik S.E."/>
            <person name="Smith C.D."/>
            <person name="Tupy J.L."/>
            <person name="Whitfield E.J."/>
            <person name="Bayraktaroglu L."/>
            <person name="Berman B.P."/>
            <person name="Bettencourt B.R."/>
            <person name="Celniker S.E."/>
            <person name="de Grey A.D.N.J."/>
            <person name="Drysdale R.A."/>
            <person name="Harris N.L."/>
            <person name="Richter J."/>
            <person name="Russo S."/>
            <person name="Schroeder A.J."/>
            <person name="Shu S.Q."/>
            <person name="Stapleton M."/>
            <person name="Yamada C."/>
            <person name="Ashburner M."/>
            <person name="Gelbart W.M."/>
            <person name="Rubin G.M."/>
            <person name="Lewis S.E."/>
        </authorList>
    </citation>
    <scope>GENOME REANNOTATION</scope>
    <source>
        <strain>Berkeley</strain>
    </source>
</reference>
<reference key="5">
    <citation type="journal article" date="1999" name="Curr. Biol.">
        <title>The Drosophila ATM homologue Mei-41 has an essential checkpoint function at the midblastula transition.</title>
        <authorList>
            <person name="Sibon O.C.M."/>
            <person name="Laurencon A."/>
            <person name="Hawley R."/>
            <person name="Theurkauf W.E."/>
        </authorList>
    </citation>
    <scope>FUNCTION</scope>
    <scope>DEVELOPMENTAL STAGE</scope>
</reference>
<reference key="6">
    <citation type="journal article" date="2001" name="Curr. Biol.">
        <title>mei-41 and bub1 block mitosis at two distinct steps in response to incomplete DNA replication in Drosophila embryos.</title>
        <authorList>
            <person name="Garner M."/>
            <person name="van Kreeveld S."/>
            <person name="Su T.T."/>
        </authorList>
    </citation>
    <scope>FUNCTION</scope>
</reference>
<reference key="7">
    <citation type="journal article" date="2002" name="Curr. Biol.">
        <title>Activation of a meiotic checkpoint during Drosophila oogenesis regulates the translation of Gurken through Chk2/Mnk.</title>
        <authorList>
            <person name="Abdu U."/>
            <person name="Brodsky M."/>
            <person name="Schuepbach T."/>
        </authorList>
    </citation>
    <scope>FUNCTION</scope>
</reference>
<reference key="8">
    <citation type="journal article" date="2003" name="Dev. Cell">
        <title>Distinct pathways mediate UV-induced apoptosis in Drosophila embryos.</title>
        <authorList>
            <person name="Zhou L."/>
            <person name="Steller H."/>
        </authorList>
    </citation>
    <scope>FUNCTION</scope>
</reference>
<reference key="9">
    <citation type="journal article" date="2003" name="Genetics">
        <title>Phenotypic analysis of separation-of-function alleles of MEI-41, Drosophila ATM/ATR.</title>
        <authorList>
            <person name="Laurencon A."/>
            <person name="Purdy A."/>
            <person name="Sekelsky J."/>
            <person name="Hawley R.S."/>
            <person name="Su T.T."/>
        </authorList>
    </citation>
    <scope>MUTAGENESIS OF TRP-253; ALA-647; SER-810; THR-815; LEU-818; HIS-2032 AND PRO-2322</scope>
</reference>
<reference key="10">
    <citation type="journal article" date="2004" name="Curr. Biol.">
        <title>Relative contribution of DNA repair, cell cycle checkpoints, and cell death to survival after DNA damage in Drosophila larvae.</title>
        <authorList>
            <person name="Jaklevic B.R."/>
            <person name="Su T.T."/>
        </authorList>
    </citation>
    <scope>FUNCTION</scope>
</reference>
<reference key="11">
    <citation type="journal article" date="2005" name="J. Cell Sci.">
        <title>Grp/DChk1 is required for G2-M checkpoint activation in Drosophila S2 cells, whereas Dmnk/DChk2 is dispensable.</title>
        <authorList>
            <person name="de Vries H.I."/>
            <person name="Uyetake L."/>
            <person name="Lemstra W."/>
            <person name="Brunsting J.F."/>
            <person name="Su T.T."/>
            <person name="Kampinga H.H."/>
            <person name="Sibon O.C.M."/>
        </authorList>
    </citation>
    <scope>PHOSPHORYLATION OF GRP</scope>
</reference>
<reference key="12">
    <citation type="journal article" date="2008" name="J. Proteome Res.">
        <title>Phosphoproteome analysis of Drosophila melanogaster embryos.</title>
        <authorList>
            <person name="Zhai B."/>
            <person name="Villen J."/>
            <person name="Beausoleil S.A."/>
            <person name="Mintseris J."/>
            <person name="Gygi S.P."/>
        </authorList>
    </citation>
    <scope>PHOSPHORYLATION [LARGE SCALE ANALYSIS] AT SER-1569; TYR-1570; SER-1573 AND THR-1575</scope>
    <scope>IDENTIFICATION BY MASS SPECTROMETRY</scope>
    <source>
        <tissue>Embryo</tissue>
    </source>
</reference>
<reference key="13">
    <citation type="journal article" date="2009" name="J. Cell Sci.">
        <title>A product of the bicistronic Drosophila melanogaster gene CG31241, which also encodes a trimethylguanosine synthase, plays a role in telomere protection.</title>
        <authorList>
            <person name="Komonyi O."/>
            <person name="Schauer T."/>
            <person name="Papai G."/>
            <person name="Deak P."/>
            <person name="Boros I.M."/>
        </authorList>
    </citation>
    <scope>FUNCTION</scope>
</reference>
<reference key="14">
    <citation type="journal article" date="2018" name="PLoS Biol.">
        <title>Rif1 prolongs the embryonic S phase at the Drosophila mid-blastula transition.</title>
        <authorList>
            <person name="Seller C.A."/>
            <person name="O'Farrell P.H."/>
        </authorList>
    </citation>
    <scope>DISRUPTION PHENOTYPE</scope>
</reference>
<sequence>MSTQRKDMWKLLYNHVNRNVSNFSGVYSVIEDILCQEPSLISCSLVRELHNKFQDTFLLWLLNKLAKCLSESPDSSECINLQRKILSSCCSNHPKLFERLVLAYVEAIEETHLQLSSLDLGQLSNERKPAITVRIFRCDVECLQEFDPHCAIEDIKVPLEQADMYAKSLLEVLQHAHHIGYATHGDIFSGSLHQALLILKECDMDTKLASLNYCHNVLRSQSASSWITNPDVGHYAQLTLEATAIMWSAVAKWLDMGCMTRQELKRLNITTKLLLEVLHMRARPAHHLGYLLLNEILSLPTAIELDDGLLETLSSYIQGQLEHSVVPLEQLVHLQQLMLSHWHCHPTHLVPILALMGLKQTEMRSGVVQVLTQSLVEILKKEEVLSKDWQKLIAILRGFKQLEKLILSQSQHKIAEHEGHIDSSVLAMLPLQCEIIKVADTNWNNLSMQLVELESKCSADRRHIHLEICSLLMQITFIRHFLKTQTQHQLLAILQRHLKLSYLCAIRLETPSSVHTQMQSFYAQQYMRLFQSEETQEIFCSNLPQLYISGFIKPEQLMKALPTINNRSGRAQVIRLLLCSQPGKLSVFKVKDRIELYCPKCRPLPKKLPGIYLGKCKQQLPCPDFSSTNLEMIANDLLFYPDFECIAQHLDLLCFEPNVILGLLRETEALQKVSVKVIGQLVSAMRVRSPEFLEQLANLVLAAIKAMLAKPLTEQNVLQQRSMLNVLTAIAHMEDNEIWLFHWFKMTFFFLVHTRSLVAQEAVLAATEMCASQGLQTIHLWNWYKRDALDLTVRLALNVYLLDGVRFTRSLRALTKMLGFTCVQEFTCKYHRLLTAMVLPHCIVNPLCKGVLVLIAKQMQKHIGTLFSISFLRIYTHVFLTEEPELANSCIELVVSCTQSSLQQLMNADVKQTVAELLIYFNRNPTFVMRSFQSLLQLSIGSLEELSSQTANAEFANFIAERFLGVITYFESCLSEPSFEKPLKEETLYSLGQIMRFVGSQHVTQFRFKIIAMLSFVHTLQEPRLQRICLKIWHIFLHVVNVQELGPSLGRIVATLQPLLADNESVKQVNDLYEFIILRNASMLGTFITDLYFLDRMENVSPSIQKCIRRHTAHLDLKGLAEEENQSPPLVDQLRFLQKHITDECLQVRVYALQHLGDLFGRRRPKLNSTILSELPLEPMLEQIVNVLMAGCQHDDSQLQMASAKCLGELGAIDASYLPSNYNFASPQHLPLNILSDDFAVLALTSLCRGYQFQQNTKHVDSFSLAIQETLAICGISPKEQKKVQLWQSLPARMRQLMEPMLHSCYTCVHRPSTCLQQPLFGSHYSHNYYEEWAFLWASRLIDYLPSSGRRHLLSSYKPCIKRDSNMLSTFYPYILLHALLECTTEQRNHIQEEFMAVLQANEESSSSVRGRQELGAIKENAFKQFESRKYAAGIKPLASTLVSDRKEDSSRVPRLAGKLCAELLDFLQRWLREWQRIHGRSTGGKPPETIDSNYRKIHEFLNLIPKLLVSRASYNCGEYARALSYLESYLEEGEDKSQRLLEQFTFLVEVYGSLRDPDSVEGAVQVRSYDMSVTQDILVNRLVERQQDMITSYEQLLSSTDQMQPDHVRAMIDAYLRDTPKTAQLIADGLWQRLSDRYSDQCFAECKSELLWRLGSYDEMEELQSNWPAQCSQGCLKLRRPLTTRIEFDSLLDGMRESVLEELRSCSAVQQHSYANAYDAVLKLHLVHELHCSQELVEKLEQDRDEDNQEKLMKNYFDDWQYRLQIVQPQVRIQESIYSFRRNILAELQRRLTDRNHLLPHLKTELARIWLNSAQINRNAGQLQRAQLYILKAAEYQPSGLFIERAKLLWQKGDQVMAMNYLEEQLSIMRSGCQGNVKQLAAEQRHLFFRGKYLQAVYSAESMHLCADAVLKYFQEAIAVHRQSESCHVQMAQFLEKILEARQGGKSEPTGEQDDMLINVMVNYAKSLRYGSEHVYQSMPRLISLWLDTTESSTNTEQVKKMNDLLTNCCTALPTAVFYTVYSQMLSRLCHPVNDVFTVLRNVIIKLVEAYPQQSLWMLLPHFKSAKAHRIKRCKLVLTDSRLQNSTFQKLLQDFNSLTERLMDLTNKEVTLDRTYKLSDLDTRLSKLCKQPEFSQILLPFEKYMQPTLPLNSDSNSSEGSHLPANQSTVNWFPYQQIYISGFQESVLILRSAAKPKKLTIRCSDGKDYDVLVKPKDDLRRDARLMEFNGLVKRYLHQDAPARQRRLHIRTYAVLPFNEECGLVEWLPNLASYRSICMNLYAQRRLVMSTRQLQSLAVPLHESIERKREVFTKQLVPAHPPVFQEWLRQRFATPHSWYEARNTYIRTVAVMSMVGYILGLGDRHGENILFAEGNGDAVHVDFNCLFNQGELLPYPEVVPFRLTHNMIVAMGPLGVEGSFRKCCEITLRLLKQESKTLMSILRPFVYDVGAQTRKGAATAKITKDVQRIADRLQGHVKRQQANSIPLSTEGQVNFLINEATKVDNLASMYIGWGAFL</sequence>
<name>ATR_DROME</name>
<protein>
    <recommendedName>
        <fullName>Serine/threonine-protein kinase ATR</fullName>
        <ecNumber>2.7.11.1</ecNumber>
    </recommendedName>
    <alternativeName>
        <fullName>Ataxia telangiectasia and Rad3-related protein homolog</fullName>
        <shortName>ATR homolog</shortName>
        <shortName>dATR</shortName>
    </alternativeName>
    <alternativeName>
        <fullName>Meiotic protein 41</fullName>
    </alternativeName>
</protein>
<gene>
    <name type="primary">mei-41</name>
    <name type="ORF">CG4252</name>
</gene>
<comment type="function">
    <text evidence="5 6 7 8 10 13 15">Serine/threonine protein kinase which activates checkpoint signaling upon genotoxic stresses such as ionizing radiation (IR), ultraviolet light (UV), or DNA replication stalling, thereby acting as a DNA damage sensor. Recognizes the substrate consensus sequence [ST]-Q. Phosphorylates various proteins, which collectively inhibits DNA replication and mitosis and promotes DNA repair and recombination. Phosphorylates grp/CHK1. Phosphorylates 'Ser-137' of histone variant H2AX/H2AV at sites of DNA damage, thereby regulating DNA damage response mechanism. Essential for the DNA damage checkpoint in larval imaginal disks and neuroblasts and for the DNA replication checkpoint in the embryo. Also has an essential role during early nuclear divisions in embryos, where it is required to delay mitosis in response to incomplete DNA replication. Also plays an important role during meiosis, where it may monitor double-strand-break repair during meiotic crossing over, to regulate the progression of prophase I, and to enforce metaphase I delay observed at the end of oogenesis. Involved in telomere maintenance and prevention of telomere fusion; potentially functioning downstream of moi/modigliani (PubMed:19240120).</text>
</comment>
<comment type="catalytic activity">
    <reaction>
        <text>L-seryl-[protein] + ATP = O-phospho-L-seryl-[protein] + ADP + H(+)</text>
        <dbReference type="Rhea" id="RHEA:17989"/>
        <dbReference type="Rhea" id="RHEA-COMP:9863"/>
        <dbReference type="Rhea" id="RHEA-COMP:11604"/>
        <dbReference type="ChEBI" id="CHEBI:15378"/>
        <dbReference type="ChEBI" id="CHEBI:29999"/>
        <dbReference type="ChEBI" id="CHEBI:30616"/>
        <dbReference type="ChEBI" id="CHEBI:83421"/>
        <dbReference type="ChEBI" id="CHEBI:456216"/>
        <dbReference type="EC" id="2.7.11.1"/>
    </reaction>
</comment>
<comment type="catalytic activity">
    <reaction>
        <text>L-threonyl-[protein] + ATP = O-phospho-L-threonyl-[protein] + ADP + H(+)</text>
        <dbReference type="Rhea" id="RHEA:46608"/>
        <dbReference type="Rhea" id="RHEA-COMP:11060"/>
        <dbReference type="Rhea" id="RHEA-COMP:11605"/>
        <dbReference type="ChEBI" id="CHEBI:15378"/>
        <dbReference type="ChEBI" id="CHEBI:30013"/>
        <dbReference type="ChEBI" id="CHEBI:30616"/>
        <dbReference type="ChEBI" id="CHEBI:61977"/>
        <dbReference type="ChEBI" id="CHEBI:456216"/>
        <dbReference type="EC" id="2.7.11.1"/>
    </reaction>
</comment>
<comment type="cofactor">
    <cofactor evidence="1">
        <name>Mn(2+)</name>
        <dbReference type="ChEBI" id="CHEBI:29035"/>
    </cofactor>
</comment>
<comment type="subunit">
    <text evidence="11">Interacts with mus304.</text>
</comment>
<comment type="subcellular location">
    <subcellularLocation>
        <location evidence="16">Nucleus</location>
    </subcellularLocation>
</comment>
<comment type="developmental stage">
    <text evidence="5">Expressed both maternally and zygotically.</text>
</comment>
<comment type="disruption phenotype">
    <text evidence="14">In embryos, during S phase of mid-blastula transition, fails to delay the activation of Cdk1, leads to loss of Rif1 foci, and results in cells entering prematurely into mitosis 13 before the completion of replication resulting in chromosome bridging.</text>
</comment>
<comment type="similarity">
    <text evidence="16">Belongs to the PI3/PI4-kinase family. ATM subfamily.</text>
</comment>
<comment type="caution">
    <text evidence="16">Called dATM in some references while it is the ortholog of ATR.</text>
</comment>
<comment type="sequence caution" evidence="16">
    <conflict type="erroneous gene model prediction">
        <sequence resource="EMBL-CDS" id="AAC46881"/>
    </conflict>
</comment>
<dbReference type="EC" id="2.7.11.1"/>
<dbReference type="EMBL" id="U34925">
    <property type="protein sequence ID" value="AAC46881.1"/>
    <property type="status" value="ALT_SEQ"/>
    <property type="molecule type" value="Genomic_DNA"/>
</dbReference>
<dbReference type="EMBL" id="AY282465">
    <property type="protein sequence ID" value="AAQ22732.1"/>
    <property type="molecule type" value="mRNA"/>
</dbReference>
<dbReference type="EMBL" id="AE014298">
    <property type="protein sequence ID" value="AAF48604.2"/>
    <property type="molecule type" value="Genomic_DNA"/>
</dbReference>
<dbReference type="PIR" id="T13288">
    <property type="entry name" value="T13288"/>
</dbReference>
<dbReference type="RefSeq" id="NP_523369.2">
    <property type="nucleotide sequence ID" value="NM_078645.3"/>
</dbReference>
<dbReference type="SMR" id="Q9VXG8"/>
<dbReference type="BioGRID" id="58948">
    <property type="interactions" value="34"/>
</dbReference>
<dbReference type="FunCoup" id="Q9VXG8">
    <property type="interactions" value="1466"/>
</dbReference>
<dbReference type="IntAct" id="Q9VXG8">
    <property type="interactions" value="4"/>
</dbReference>
<dbReference type="STRING" id="7227.FBpp0074047"/>
<dbReference type="iPTMnet" id="Q9VXG8"/>
<dbReference type="PaxDb" id="7227-FBpp0074047"/>
<dbReference type="EnsemblMetazoa" id="FBtr0074271">
    <property type="protein sequence ID" value="FBpp0074047"/>
    <property type="gene ID" value="FBgn0004367"/>
</dbReference>
<dbReference type="GeneID" id="32608"/>
<dbReference type="KEGG" id="dme:Dmel_CG4252"/>
<dbReference type="AGR" id="FB:FBgn0004367"/>
<dbReference type="CTD" id="32608"/>
<dbReference type="FlyBase" id="FBgn0004367">
    <property type="gene designation" value="mei-41"/>
</dbReference>
<dbReference type="VEuPathDB" id="VectorBase:FBgn0004367"/>
<dbReference type="eggNOG" id="KOG0890">
    <property type="taxonomic scope" value="Eukaryota"/>
</dbReference>
<dbReference type="GeneTree" id="ENSGT00940000155714"/>
<dbReference type="HOGENOM" id="CLU_000178_1_0_1"/>
<dbReference type="InParanoid" id="Q9VXG8"/>
<dbReference type="OMA" id="YTVYSQM"/>
<dbReference type="OrthoDB" id="381190at2759"/>
<dbReference type="PhylomeDB" id="Q9VXG8"/>
<dbReference type="Reactome" id="R-DME-176187">
    <property type="pathway name" value="Activation of ATR in response to replication stress"/>
</dbReference>
<dbReference type="Reactome" id="R-DME-5693607">
    <property type="pathway name" value="Processing of DNA double-strand break ends"/>
</dbReference>
<dbReference type="Reactome" id="R-DME-6804756">
    <property type="pathway name" value="Regulation of TP53 Activity through Phosphorylation"/>
</dbReference>
<dbReference type="Reactome" id="R-DME-69473">
    <property type="pathway name" value="G2/M DNA damage checkpoint"/>
</dbReference>
<dbReference type="SignaLink" id="Q9VXG8"/>
<dbReference type="BioGRID-ORCS" id="32608">
    <property type="hits" value="0 hits in 3 CRISPR screens"/>
</dbReference>
<dbReference type="GenomeRNAi" id="32608"/>
<dbReference type="PRO" id="PR:Q9VXG8"/>
<dbReference type="Proteomes" id="UP000000803">
    <property type="component" value="Chromosome X"/>
</dbReference>
<dbReference type="Bgee" id="FBgn0004367">
    <property type="expression patterns" value="Expressed in egg cell and 10 other cell types or tissues"/>
</dbReference>
<dbReference type="ExpressionAtlas" id="Q9VXG8">
    <property type="expression patterns" value="baseline and differential"/>
</dbReference>
<dbReference type="GO" id="GO:0005694">
    <property type="term" value="C:chromosome"/>
    <property type="evidence" value="ECO:0000318"/>
    <property type="project" value="GO_Central"/>
</dbReference>
<dbReference type="GO" id="GO:0005634">
    <property type="term" value="C:nucleus"/>
    <property type="evidence" value="ECO:0000250"/>
    <property type="project" value="FlyBase"/>
</dbReference>
<dbReference type="GO" id="GO:0005524">
    <property type="term" value="F:ATP binding"/>
    <property type="evidence" value="ECO:0007669"/>
    <property type="project" value="UniProtKB-KW"/>
</dbReference>
<dbReference type="GO" id="GO:0003677">
    <property type="term" value="F:DNA binding"/>
    <property type="evidence" value="ECO:0007669"/>
    <property type="project" value="UniProtKB-KW"/>
</dbReference>
<dbReference type="GO" id="GO:0106310">
    <property type="term" value="F:protein serine kinase activity"/>
    <property type="evidence" value="ECO:0007669"/>
    <property type="project" value="RHEA"/>
</dbReference>
<dbReference type="GO" id="GO:0004674">
    <property type="term" value="F:protein serine/threonine kinase activity"/>
    <property type="evidence" value="ECO:0000250"/>
    <property type="project" value="FlyBase"/>
</dbReference>
<dbReference type="GO" id="GO:0007349">
    <property type="term" value="P:cellularization"/>
    <property type="evidence" value="ECO:0000304"/>
    <property type="project" value="FlyBase"/>
</dbReference>
<dbReference type="GO" id="GO:0030261">
    <property type="term" value="P:chromosome condensation"/>
    <property type="evidence" value="ECO:0000316"/>
    <property type="project" value="FlyBase"/>
</dbReference>
<dbReference type="GO" id="GO:0000077">
    <property type="term" value="P:DNA damage checkpoint signaling"/>
    <property type="evidence" value="ECO:0000315"/>
    <property type="project" value="FlyBase"/>
</dbReference>
<dbReference type="GO" id="GO:0006281">
    <property type="term" value="P:DNA repair"/>
    <property type="evidence" value="ECO:0000318"/>
    <property type="project" value="GO_Central"/>
</dbReference>
<dbReference type="GO" id="GO:0000076">
    <property type="term" value="P:DNA replication checkpoint signaling"/>
    <property type="evidence" value="ECO:0000315"/>
    <property type="project" value="FlyBase"/>
</dbReference>
<dbReference type="GO" id="GO:0006302">
    <property type="term" value="P:double-strand break repair"/>
    <property type="evidence" value="ECO:0000315"/>
    <property type="project" value="FlyBase"/>
</dbReference>
<dbReference type="GO" id="GO:0045002">
    <property type="term" value="P:double-strand break repair via single-strand annealing"/>
    <property type="evidence" value="ECO:0000315"/>
    <property type="project" value="FlyBase"/>
</dbReference>
<dbReference type="GO" id="GO:0045003">
    <property type="term" value="P:double-strand break repair via synthesis-dependent strand annealing"/>
    <property type="evidence" value="ECO:0000315"/>
    <property type="project" value="FlyBase"/>
</dbReference>
<dbReference type="GO" id="GO:0001700">
    <property type="term" value="P:embryonic development via the syncytial blastoderm"/>
    <property type="evidence" value="ECO:0000304"/>
    <property type="project" value="FlyBase"/>
</dbReference>
<dbReference type="GO" id="GO:0016321">
    <property type="term" value="P:female meiosis chromosome segregation"/>
    <property type="evidence" value="ECO:0000315"/>
    <property type="project" value="FlyBase"/>
</dbReference>
<dbReference type="GO" id="GO:0007444">
    <property type="term" value="P:imaginal disc development"/>
    <property type="evidence" value="ECO:0000304"/>
    <property type="project" value="FlyBase"/>
</dbReference>
<dbReference type="GO" id="GO:0000706">
    <property type="term" value="P:meiotic DNA double-strand break processing"/>
    <property type="evidence" value="ECO:0000314"/>
    <property type="project" value="FlyBase"/>
</dbReference>
<dbReference type="GO" id="GO:0033314">
    <property type="term" value="P:mitotic DNA replication checkpoint signaling"/>
    <property type="evidence" value="ECO:0000315"/>
    <property type="project" value="FlyBase"/>
</dbReference>
<dbReference type="GO" id="GO:0030716">
    <property type="term" value="P:oocyte fate determination"/>
    <property type="evidence" value="ECO:0000315"/>
    <property type="project" value="FlyBase"/>
</dbReference>
<dbReference type="GO" id="GO:0007131">
    <property type="term" value="P:reciprocal meiotic recombination"/>
    <property type="evidence" value="ECO:0000315"/>
    <property type="project" value="FlyBase"/>
</dbReference>
<dbReference type="GO" id="GO:1901990">
    <property type="term" value="P:regulation of mitotic cell cycle phase transition"/>
    <property type="evidence" value="ECO:0000315"/>
    <property type="project" value="UniProtKB"/>
</dbReference>
<dbReference type="GO" id="GO:0007088">
    <property type="term" value="P:regulation of mitotic nuclear division"/>
    <property type="evidence" value="ECO:0000315"/>
    <property type="project" value="UniProtKB"/>
</dbReference>
<dbReference type="GO" id="GO:0007348">
    <property type="term" value="P:regulation of syncytial blastoderm mitotic cell cycle"/>
    <property type="evidence" value="ECO:0000304"/>
    <property type="project" value="FlyBase"/>
</dbReference>
<dbReference type="GO" id="GO:0009314">
    <property type="term" value="P:response to radiation"/>
    <property type="evidence" value="ECO:0000304"/>
    <property type="project" value="FlyBase"/>
</dbReference>
<dbReference type="GO" id="GO:0000723">
    <property type="term" value="P:telomere maintenance"/>
    <property type="evidence" value="ECO:0000316"/>
    <property type="project" value="FlyBase"/>
</dbReference>
<dbReference type="CDD" id="cd00892">
    <property type="entry name" value="PIKKc_ATR"/>
    <property type="match status" value="1"/>
</dbReference>
<dbReference type="FunFam" id="1.10.1070.11:FF:000047">
    <property type="entry name" value="Serine/threonine-protein kinase ATR"/>
    <property type="match status" value="1"/>
</dbReference>
<dbReference type="Gene3D" id="1.25.10.10">
    <property type="entry name" value="Leucine-rich Repeat Variant"/>
    <property type="match status" value="1"/>
</dbReference>
<dbReference type="Gene3D" id="1.10.1070.11">
    <property type="entry name" value="Phosphatidylinositol 3-/4-kinase, catalytic domain"/>
    <property type="match status" value="1"/>
</dbReference>
<dbReference type="Gene3D" id="3.30.1010.10">
    <property type="entry name" value="Phosphatidylinositol 3-kinase Catalytic Subunit, Chain A, domain 4"/>
    <property type="match status" value="1"/>
</dbReference>
<dbReference type="InterPro" id="IPR011989">
    <property type="entry name" value="ARM-like"/>
</dbReference>
<dbReference type="InterPro" id="IPR016024">
    <property type="entry name" value="ARM-type_fold"/>
</dbReference>
<dbReference type="InterPro" id="IPR056802">
    <property type="entry name" value="ATR-like_M-HEAT"/>
</dbReference>
<dbReference type="InterPro" id="IPR050517">
    <property type="entry name" value="DDR_Repair_Kinase"/>
</dbReference>
<dbReference type="InterPro" id="IPR003152">
    <property type="entry name" value="FATC_dom"/>
</dbReference>
<dbReference type="InterPro" id="IPR011009">
    <property type="entry name" value="Kinase-like_dom_sf"/>
</dbReference>
<dbReference type="InterPro" id="IPR000403">
    <property type="entry name" value="PI3/4_kinase_cat_dom"/>
</dbReference>
<dbReference type="InterPro" id="IPR036940">
    <property type="entry name" value="PI3/4_kinase_cat_sf"/>
</dbReference>
<dbReference type="InterPro" id="IPR018936">
    <property type="entry name" value="PI3/4_kinase_CS"/>
</dbReference>
<dbReference type="InterPro" id="IPR003151">
    <property type="entry name" value="PIK-rel_kinase_FAT"/>
</dbReference>
<dbReference type="InterPro" id="IPR014009">
    <property type="entry name" value="PIK_FAT"/>
</dbReference>
<dbReference type="InterPro" id="IPR012993">
    <property type="entry name" value="UME"/>
</dbReference>
<dbReference type="PANTHER" id="PTHR11139">
    <property type="entry name" value="ATAXIA TELANGIECTASIA MUTATED ATM -RELATED"/>
    <property type="match status" value="1"/>
</dbReference>
<dbReference type="PANTHER" id="PTHR11139:SF69">
    <property type="entry name" value="SERINE_THREONINE-PROTEIN KINASE ATR"/>
    <property type="match status" value="1"/>
</dbReference>
<dbReference type="Pfam" id="PF02259">
    <property type="entry name" value="FAT"/>
    <property type="match status" value="1"/>
</dbReference>
<dbReference type="Pfam" id="PF02260">
    <property type="entry name" value="FATC"/>
    <property type="match status" value="1"/>
</dbReference>
<dbReference type="Pfam" id="PF23593">
    <property type="entry name" value="HEAT_ATR"/>
    <property type="match status" value="1"/>
</dbReference>
<dbReference type="Pfam" id="PF25030">
    <property type="entry name" value="M-HEAT_ATR"/>
    <property type="match status" value="1"/>
</dbReference>
<dbReference type="Pfam" id="PF00454">
    <property type="entry name" value="PI3_PI4_kinase"/>
    <property type="match status" value="1"/>
</dbReference>
<dbReference type="Pfam" id="PF08064">
    <property type="entry name" value="UME"/>
    <property type="match status" value="1"/>
</dbReference>
<dbReference type="SMART" id="SM01343">
    <property type="entry name" value="FATC"/>
    <property type="match status" value="1"/>
</dbReference>
<dbReference type="SMART" id="SM00146">
    <property type="entry name" value="PI3Kc"/>
    <property type="match status" value="1"/>
</dbReference>
<dbReference type="SMART" id="SM00802">
    <property type="entry name" value="UME"/>
    <property type="match status" value="1"/>
</dbReference>
<dbReference type="SUPFAM" id="SSF48371">
    <property type="entry name" value="ARM repeat"/>
    <property type="match status" value="1"/>
</dbReference>
<dbReference type="SUPFAM" id="SSF56112">
    <property type="entry name" value="Protein kinase-like (PK-like)"/>
    <property type="match status" value="1"/>
</dbReference>
<dbReference type="PROSITE" id="PS51189">
    <property type="entry name" value="FAT"/>
    <property type="match status" value="1"/>
</dbReference>
<dbReference type="PROSITE" id="PS51190">
    <property type="entry name" value="FATC"/>
    <property type="match status" value="1"/>
</dbReference>
<dbReference type="PROSITE" id="PS00916">
    <property type="entry name" value="PI3_4_KINASE_2"/>
    <property type="match status" value="1"/>
</dbReference>
<dbReference type="PROSITE" id="PS50290">
    <property type="entry name" value="PI3_4_KINASE_3"/>
    <property type="match status" value="1"/>
</dbReference>
<organism>
    <name type="scientific">Drosophila melanogaster</name>
    <name type="common">Fruit fly</name>
    <dbReference type="NCBI Taxonomy" id="7227"/>
    <lineage>
        <taxon>Eukaryota</taxon>
        <taxon>Metazoa</taxon>
        <taxon>Ecdysozoa</taxon>
        <taxon>Arthropoda</taxon>
        <taxon>Hexapoda</taxon>
        <taxon>Insecta</taxon>
        <taxon>Pterygota</taxon>
        <taxon>Neoptera</taxon>
        <taxon>Endopterygota</taxon>
        <taxon>Diptera</taxon>
        <taxon>Brachycera</taxon>
        <taxon>Muscomorpha</taxon>
        <taxon>Ephydroidea</taxon>
        <taxon>Drosophilidae</taxon>
        <taxon>Drosophila</taxon>
        <taxon>Sophophora</taxon>
    </lineage>
</organism>
<accession>Q9VXG8</accession>
<accession>Q24135</accession>
<feature type="chain" id="PRO_0000225630" description="Serine/threonine-protein kinase ATR">
    <location>
        <begin position="1"/>
        <end position="2517"/>
    </location>
</feature>
<feature type="repeat" description="HEAT">
    <location>
        <begin position="1178"/>
        <end position="1214"/>
    </location>
</feature>
<feature type="domain" description="FAT" evidence="3">
    <location>
        <begin position="1509"/>
        <end position="2066"/>
    </location>
</feature>
<feature type="domain" description="PI3K/PI4K catalytic" evidence="2">
    <location>
        <begin position="2184"/>
        <end position="2508"/>
    </location>
</feature>
<feature type="domain" description="FATC" evidence="3 4">
    <location>
        <begin position="2485"/>
        <end position="2517"/>
    </location>
</feature>
<feature type="region of interest" description="G-loop" evidence="2">
    <location>
        <begin position="2190"/>
        <end position="2196"/>
    </location>
</feature>
<feature type="region of interest" description="Catalytic loop" evidence="2">
    <location>
        <begin position="2360"/>
        <end position="2368"/>
    </location>
</feature>
<feature type="region of interest" description="Activation loop" evidence="2">
    <location>
        <begin position="2380"/>
        <end position="2404"/>
    </location>
</feature>
<feature type="modified residue" description="Phosphoserine" evidence="12">
    <location>
        <position position="1569"/>
    </location>
</feature>
<feature type="modified residue" description="Phosphotyrosine" evidence="12">
    <location>
        <position position="1570"/>
    </location>
</feature>
<feature type="modified residue" description="Phosphoserine" evidence="12">
    <location>
        <position position="1573"/>
    </location>
</feature>
<feature type="modified residue" description="Phosphothreonine" evidence="12">
    <location>
        <position position="1575"/>
    </location>
</feature>
<feature type="mutagenesis site" description="In mei-41D12; induces a weak sensitivity to methanesulfonate." evidence="9">
    <original>W</original>
    <variation>T</variation>
    <location>
        <position position="253"/>
    </location>
</feature>
<feature type="mutagenesis site" description="In mei-41D3; induces a very strong sensitivity to methanesulfonate and female infertility." evidence="9">
    <original>A</original>
    <variation>V</variation>
    <location>
        <position position="647"/>
    </location>
</feature>
<feature type="mutagenesis site" description="In mei-41D9; induces some sensitivity to methanesulfonate." evidence="9">
    <original>S</original>
    <variation>F</variation>
    <location>
        <position position="810"/>
    </location>
</feature>
<feature type="mutagenesis site" description="In mei-41D15; induces some sensitivity to methanesulfonate." evidence="9">
    <original>T</original>
    <variation>P</variation>
    <location>
        <position position="815"/>
    </location>
</feature>
<feature type="mutagenesis site" description="In mei-41D14; induces some sensitivity to methanesulfonate." evidence="9">
    <original>L</original>
    <variation>F</variation>
    <location>
        <position position="818"/>
    </location>
</feature>
<feature type="mutagenesis site" description="In mei-41D12; induces a weak sensitivity to methanesulfonate." evidence="9">
    <original>H</original>
    <variation>Y</variation>
    <location>
        <position position="2032"/>
    </location>
</feature>
<feature type="mutagenesis site" description="In mei-41D5; induces a strong sensitivity to methanesulfonate." evidence="9">
    <original>P</original>
    <variation>L</variation>
    <location>
        <position position="2322"/>
    </location>
</feature>
<feature type="sequence conflict" description="In Ref. 1." evidence="16" ref="1">
    <original>N</original>
    <variation>I</variation>
    <location>
        <position position="22"/>
    </location>
</feature>
<feature type="sequence conflict" description="In Ref. 1; AAC46881." evidence="16" ref="1">
    <original>M</original>
    <variation>L</variation>
    <location>
        <position position="338"/>
    </location>
</feature>
<feature type="sequence conflict" description="In Ref. 1; AAC46881." evidence="16" ref="1">
    <original>H</original>
    <variation>Y</variation>
    <location>
        <position position="345"/>
    </location>
</feature>
<feature type="sequence conflict" description="In Ref. 1; AAC46881." evidence="16" ref="1">
    <original>L</original>
    <variation>M</variation>
    <location>
        <position position="392"/>
    </location>
</feature>
<feature type="sequence conflict" description="In Ref. 1; AAC46881." evidence="16" ref="1">
    <original>R</original>
    <variation>Q</variation>
    <location>
        <position position="461"/>
    </location>
</feature>
<feature type="sequence conflict" description="In Ref. 1; AAC46881." evidence="16" ref="1">
    <original>Y</original>
    <variation>H</variation>
    <location>
        <position position="502"/>
    </location>
</feature>
<feature type="sequence conflict" description="In Ref. 1; AAC46881." evidence="16" ref="1">
    <original>S</original>
    <variation>G</variation>
    <location>
        <position position="568"/>
    </location>
</feature>
<feature type="sequence conflict" description="In Ref. 1; AAC46881." evidence="16" ref="1">
    <original>T</original>
    <variation>A</variation>
    <location>
        <position position="713"/>
    </location>
</feature>
<feature type="sequence conflict" description="In Ref. 1; AAC46881." evidence="16" ref="1">
    <original>N</original>
    <variation>D</variation>
    <location>
        <position position="1125"/>
    </location>
</feature>
<feature type="sequence conflict" description="In Ref. 1; AAC46881." evidence="16" ref="1">
    <original>R</original>
    <variation>K</variation>
    <location>
        <position position="1350"/>
    </location>
</feature>
<keyword id="KW-0067">ATP-binding</keyword>
<keyword id="KW-0217">Developmental protein</keyword>
<keyword id="KW-0227">DNA damage</keyword>
<keyword id="KW-0234">DNA repair</keyword>
<keyword id="KW-0238">DNA-binding</keyword>
<keyword id="KW-0418">Kinase</keyword>
<keyword id="KW-0464">Manganese</keyword>
<keyword id="KW-0547">Nucleotide-binding</keyword>
<keyword id="KW-0539">Nucleus</keyword>
<keyword id="KW-0597">Phosphoprotein</keyword>
<keyword id="KW-1185">Reference proteome</keyword>
<keyword id="KW-0677">Repeat</keyword>
<keyword id="KW-0723">Serine/threonine-protein kinase</keyword>
<keyword id="KW-0808">Transferase</keyword>
<proteinExistence type="evidence at protein level"/>